<reference key="1">
    <citation type="journal article" date="2007" name="J. Bacteriol.">
        <title>The genome sequence of avian pathogenic Escherichia coli strain O1:K1:H7 shares strong similarities with human extraintestinal pathogenic E. coli genomes.</title>
        <authorList>
            <person name="Johnson T.J."/>
            <person name="Kariyawasam S."/>
            <person name="Wannemuehler Y."/>
            <person name="Mangiamele P."/>
            <person name="Johnson S.J."/>
            <person name="Doetkott C."/>
            <person name="Skyberg J.A."/>
            <person name="Lynne A.M."/>
            <person name="Johnson J.R."/>
            <person name="Nolan L.K."/>
        </authorList>
    </citation>
    <scope>NUCLEOTIDE SEQUENCE [LARGE SCALE GENOMIC DNA]</scope>
</reference>
<protein>
    <recommendedName>
        <fullName evidence="1">Rhamnulose-1-phosphate aldolase</fullName>
        <ecNumber evidence="1">4.1.2.19</ecNumber>
    </recommendedName>
</protein>
<proteinExistence type="inferred from homology"/>
<gene>
    <name evidence="1" type="primary">rhaD</name>
    <name type="ordered locus">Ecok1_38750</name>
    <name type="ORF">APECO1_2566</name>
</gene>
<keyword id="KW-0963">Cytoplasm</keyword>
<keyword id="KW-0456">Lyase</keyword>
<keyword id="KW-0479">Metal-binding</keyword>
<keyword id="KW-1185">Reference proteome</keyword>
<keyword id="KW-0684">Rhamnose metabolism</keyword>
<keyword id="KW-0862">Zinc</keyword>
<dbReference type="EC" id="4.1.2.19" evidence="1"/>
<dbReference type="EMBL" id="CP000468">
    <property type="protein sequence ID" value="ABJ03369.1"/>
    <property type="molecule type" value="Genomic_DNA"/>
</dbReference>
<dbReference type="RefSeq" id="WP_001179744.1">
    <property type="nucleotide sequence ID" value="NZ_CADILS010000014.1"/>
</dbReference>
<dbReference type="SMR" id="A1AI79"/>
<dbReference type="KEGG" id="ecv:APECO1_2566"/>
<dbReference type="HOGENOM" id="CLU_076831_0_0_6"/>
<dbReference type="UniPathway" id="UPA00541">
    <property type="reaction ID" value="UER00603"/>
</dbReference>
<dbReference type="Proteomes" id="UP000008216">
    <property type="component" value="Chromosome"/>
</dbReference>
<dbReference type="GO" id="GO:0005829">
    <property type="term" value="C:cytosol"/>
    <property type="evidence" value="ECO:0007669"/>
    <property type="project" value="TreeGrafter"/>
</dbReference>
<dbReference type="GO" id="GO:0046872">
    <property type="term" value="F:metal ion binding"/>
    <property type="evidence" value="ECO:0007669"/>
    <property type="project" value="UniProtKB-KW"/>
</dbReference>
<dbReference type="GO" id="GO:0008994">
    <property type="term" value="F:rhamnulose-1-phosphate aldolase activity"/>
    <property type="evidence" value="ECO:0007669"/>
    <property type="project" value="UniProtKB-UniRule"/>
</dbReference>
<dbReference type="GO" id="GO:0019323">
    <property type="term" value="P:pentose catabolic process"/>
    <property type="evidence" value="ECO:0007669"/>
    <property type="project" value="TreeGrafter"/>
</dbReference>
<dbReference type="GO" id="GO:0019301">
    <property type="term" value="P:rhamnose catabolic process"/>
    <property type="evidence" value="ECO:0007669"/>
    <property type="project" value="UniProtKB-UniRule"/>
</dbReference>
<dbReference type="CDD" id="cd00398">
    <property type="entry name" value="Aldolase_II"/>
    <property type="match status" value="1"/>
</dbReference>
<dbReference type="FunFam" id="3.40.225.10:FF:000006">
    <property type="entry name" value="Rhamnulose-1-phosphate aldolase"/>
    <property type="match status" value="1"/>
</dbReference>
<dbReference type="Gene3D" id="3.40.225.10">
    <property type="entry name" value="Class II aldolase/adducin N-terminal domain"/>
    <property type="match status" value="1"/>
</dbReference>
<dbReference type="HAMAP" id="MF_00770">
    <property type="entry name" value="RhaD"/>
    <property type="match status" value="1"/>
</dbReference>
<dbReference type="InterPro" id="IPR050197">
    <property type="entry name" value="Aldolase_class_II_sugar_metab"/>
</dbReference>
<dbReference type="InterPro" id="IPR001303">
    <property type="entry name" value="Aldolase_II/adducin_N"/>
</dbReference>
<dbReference type="InterPro" id="IPR036409">
    <property type="entry name" value="Aldolase_II/adducin_N_sf"/>
</dbReference>
<dbReference type="InterPro" id="IPR013447">
    <property type="entry name" value="Rhamnulose-1-P_Aldolase"/>
</dbReference>
<dbReference type="NCBIfam" id="NF002963">
    <property type="entry name" value="PRK03634.1"/>
    <property type="match status" value="1"/>
</dbReference>
<dbReference type="NCBIfam" id="TIGR02624">
    <property type="entry name" value="rhamnu_1P_ald"/>
    <property type="match status" value="1"/>
</dbReference>
<dbReference type="PANTHER" id="PTHR22789">
    <property type="entry name" value="FUCULOSE PHOSPHATE ALDOLASE"/>
    <property type="match status" value="1"/>
</dbReference>
<dbReference type="PANTHER" id="PTHR22789:SF16">
    <property type="entry name" value="RHAMNULOSE-1-PHOSPHATE ALDOLASE"/>
    <property type="match status" value="1"/>
</dbReference>
<dbReference type="Pfam" id="PF00596">
    <property type="entry name" value="Aldolase_II"/>
    <property type="match status" value="1"/>
</dbReference>
<dbReference type="SMART" id="SM01007">
    <property type="entry name" value="Aldolase_II"/>
    <property type="match status" value="1"/>
</dbReference>
<dbReference type="SUPFAM" id="SSF53639">
    <property type="entry name" value="AraD/HMP-PK domain-like"/>
    <property type="match status" value="1"/>
</dbReference>
<feature type="chain" id="PRO_1000017337" description="Rhamnulose-1-phosphate aldolase">
    <location>
        <begin position="1"/>
        <end position="274"/>
    </location>
</feature>
<feature type="active site" evidence="1">
    <location>
        <position position="117"/>
    </location>
</feature>
<feature type="binding site" evidence="1">
    <location>
        <position position="141"/>
    </location>
    <ligand>
        <name>Zn(2+)</name>
        <dbReference type="ChEBI" id="CHEBI:29105"/>
    </ligand>
</feature>
<feature type="binding site" evidence="1">
    <location>
        <position position="143"/>
    </location>
    <ligand>
        <name>Zn(2+)</name>
        <dbReference type="ChEBI" id="CHEBI:29105"/>
    </ligand>
</feature>
<feature type="binding site" evidence="1">
    <location>
        <position position="212"/>
    </location>
    <ligand>
        <name>Zn(2+)</name>
        <dbReference type="ChEBI" id="CHEBI:29105"/>
    </ligand>
</feature>
<organism>
    <name type="scientific">Escherichia coli O1:K1 / APEC</name>
    <dbReference type="NCBI Taxonomy" id="405955"/>
    <lineage>
        <taxon>Bacteria</taxon>
        <taxon>Pseudomonadati</taxon>
        <taxon>Pseudomonadota</taxon>
        <taxon>Gammaproteobacteria</taxon>
        <taxon>Enterobacterales</taxon>
        <taxon>Enterobacteriaceae</taxon>
        <taxon>Escherichia</taxon>
    </lineage>
</organism>
<name>RHAD_ECOK1</name>
<sequence>MQNITQSWFVQGMIKATTDAWLKGWDERNGGNLTLRLDDADIAPYHDNFHQQPRYIPLSQPMPLLANTPFIVTGSGKFFRNVQLDPAANLGIVKVDSDGAGYHILWGLTNEAVPTSELPAHFLSHCERIKATNGKDRVIMHCHATNLIALTYVLENDTAVFTRQLWEGSTECLVVFPDGVGILPWMVPGTDEIGQATAQEMQKHSLVLWPFHGVFGSGPTLDETFGLIDTAEKSAQILVKVYSMGGMKQTISREELIALGQRFGVTPLASALAL</sequence>
<evidence type="ECO:0000255" key="1">
    <source>
        <dbReference type="HAMAP-Rule" id="MF_00770"/>
    </source>
</evidence>
<accession>A1AI79</accession>
<comment type="function">
    <text evidence="1">Catalyzes the reversible cleavage of L-rhamnulose-1-phosphate to dihydroxyacetone phosphate (DHAP) and L-lactaldehyde.</text>
</comment>
<comment type="catalytic activity">
    <reaction evidence="1">
        <text>L-rhamnulose 1-phosphate = (S)-lactaldehyde + dihydroxyacetone phosphate</text>
        <dbReference type="Rhea" id="RHEA:19689"/>
        <dbReference type="ChEBI" id="CHEBI:18041"/>
        <dbReference type="ChEBI" id="CHEBI:57642"/>
        <dbReference type="ChEBI" id="CHEBI:58313"/>
        <dbReference type="EC" id="4.1.2.19"/>
    </reaction>
</comment>
<comment type="cofactor">
    <cofactor evidence="1">
        <name>Zn(2+)</name>
        <dbReference type="ChEBI" id="CHEBI:29105"/>
    </cofactor>
    <text evidence="1">Binds 1 zinc ion per subunit.</text>
</comment>
<comment type="pathway">
    <text evidence="1">Carbohydrate degradation; L-rhamnose degradation; glycerone phosphate from L-rhamnose: step 3/3.</text>
</comment>
<comment type="subunit">
    <text evidence="1">Homotetramer.</text>
</comment>
<comment type="subcellular location">
    <subcellularLocation>
        <location evidence="1">Cytoplasm</location>
    </subcellularLocation>
</comment>
<comment type="similarity">
    <text evidence="1">Belongs to the aldolase class II family. RhaD subfamily.</text>
</comment>